<keyword id="KW-0963">Cytoplasm</keyword>
<keyword id="KW-0418">Kinase</keyword>
<keyword id="KW-0479">Metal-binding</keyword>
<keyword id="KW-0597">Phosphoprotein</keyword>
<keyword id="KW-0598">Phosphotransferase system</keyword>
<keyword id="KW-1185">Reference proteome</keyword>
<keyword id="KW-0762">Sugar transport</keyword>
<keyword id="KW-0808">Transferase</keyword>
<keyword id="KW-0813">Transport</keyword>
<keyword id="KW-0862">Zinc</keyword>
<organism>
    <name type="scientific">Halalkalibacterium halodurans (strain ATCC BAA-125 / DSM 18197 / FERM 7344 / JCM 9153 / C-125)</name>
    <name type="common">Bacillus halodurans</name>
    <dbReference type="NCBI Taxonomy" id="272558"/>
    <lineage>
        <taxon>Bacteria</taxon>
        <taxon>Bacillati</taxon>
        <taxon>Bacillota</taxon>
        <taxon>Bacilli</taxon>
        <taxon>Bacillales</taxon>
        <taxon>Bacillaceae</taxon>
        <taxon>Halalkalibacterium (ex Joshi et al. 2022)</taxon>
    </lineage>
</organism>
<protein>
    <recommendedName>
        <fullName evidence="1">PTS system glucose-specific EIIA component</fullName>
    </recommendedName>
    <alternativeName>
        <fullName evidence="1">EIIA-Glc</fullName>
    </alternativeName>
    <alternativeName>
        <fullName evidence="1">EIII-Glc</fullName>
    </alternativeName>
    <alternativeName>
        <fullName evidence="1">Glucose-specific phosphotransferase enzyme IIA component</fullName>
    </alternativeName>
</protein>
<gene>
    <name type="primary">crr</name>
    <name type="ordered locus">BH1515</name>
</gene>
<name>PTGA_HALH5</name>
<reference key="1">
    <citation type="journal article" date="2000" name="Nucleic Acids Res.">
        <title>Complete genome sequence of the alkaliphilic bacterium Bacillus halodurans and genomic sequence comparison with Bacillus subtilis.</title>
        <authorList>
            <person name="Takami H."/>
            <person name="Nakasone K."/>
            <person name="Takaki Y."/>
            <person name="Maeno G."/>
            <person name="Sasaki R."/>
            <person name="Masui N."/>
            <person name="Fuji F."/>
            <person name="Hirama C."/>
            <person name="Nakamura Y."/>
            <person name="Ogasawara N."/>
            <person name="Kuhara S."/>
            <person name="Horikoshi K."/>
        </authorList>
    </citation>
    <scope>NUCLEOTIDE SEQUENCE [LARGE SCALE GENOMIC DNA]</scope>
    <source>
        <strain>ATCC BAA-125 / DSM 18197 / FERM 7344 / JCM 9153 / C-125</strain>
    </source>
</reference>
<feature type="chain" id="PRO_0000186545" description="PTS system glucose-specific EIIA component">
    <location>
        <begin position="1"/>
        <end position="173"/>
    </location>
</feature>
<feature type="domain" description="PTS EIIA type-1" evidence="2">
    <location>
        <begin position="40"/>
        <end position="144"/>
    </location>
</feature>
<feature type="active site" description="Tele-phosphohistidine intermediate; for EIIA activity" evidence="1 2">
    <location>
        <position position="92"/>
    </location>
</feature>
<feature type="binding site" evidence="1">
    <location>
        <position position="77"/>
    </location>
    <ligand>
        <name>Zn(2+)</name>
        <dbReference type="ChEBI" id="CHEBI:29105"/>
        <note>ligand shared with glycerol kinase</note>
    </ligand>
</feature>
<feature type="binding site" evidence="1">
    <location>
        <position position="92"/>
    </location>
    <ligand>
        <name>Zn(2+)</name>
        <dbReference type="ChEBI" id="CHEBI:29105"/>
        <note>ligand shared with glycerol kinase</note>
    </ligand>
</feature>
<feature type="site" description="Important for phospho-donor activity" evidence="1">
    <location>
        <position position="77"/>
    </location>
</feature>
<feature type="modified residue" description="Phosphohistidine; by HPr" evidence="1">
    <location>
        <position position="92"/>
    </location>
</feature>
<dbReference type="EMBL" id="BA000004">
    <property type="protein sequence ID" value="BAB05234.1"/>
    <property type="molecule type" value="Genomic_DNA"/>
</dbReference>
<dbReference type="PIR" id="C83839">
    <property type="entry name" value="C83839"/>
</dbReference>
<dbReference type="RefSeq" id="WP_010897680.1">
    <property type="nucleotide sequence ID" value="NC_002570.2"/>
</dbReference>
<dbReference type="SMR" id="Q9KCQ4"/>
<dbReference type="STRING" id="272558.gene:10727413"/>
<dbReference type="KEGG" id="bha:BH1515"/>
<dbReference type="eggNOG" id="COG2190">
    <property type="taxonomic scope" value="Bacteria"/>
</dbReference>
<dbReference type="HOGENOM" id="CLU_012312_5_3_9"/>
<dbReference type="OrthoDB" id="92465at2"/>
<dbReference type="Proteomes" id="UP000001258">
    <property type="component" value="Chromosome"/>
</dbReference>
<dbReference type="GO" id="GO:0005737">
    <property type="term" value="C:cytoplasm"/>
    <property type="evidence" value="ECO:0007669"/>
    <property type="project" value="UniProtKB-SubCell"/>
</dbReference>
<dbReference type="GO" id="GO:0016301">
    <property type="term" value="F:kinase activity"/>
    <property type="evidence" value="ECO:0007669"/>
    <property type="project" value="UniProtKB-KW"/>
</dbReference>
<dbReference type="GO" id="GO:0046872">
    <property type="term" value="F:metal ion binding"/>
    <property type="evidence" value="ECO:0007669"/>
    <property type="project" value="UniProtKB-KW"/>
</dbReference>
<dbReference type="GO" id="GO:0009401">
    <property type="term" value="P:phosphoenolpyruvate-dependent sugar phosphotransferase system"/>
    <property type="evidence" value="ECO:0007669"/>
    <property type="project" value="UniProtKB-KW"/>
</dbReference>
<dbReference type="FunFam" id="2.70.70.10:FF:000001">
    <property type="entry name" value="PTS system glucose-specific IIA component"/>
    <property type="match status" value="1"/>
</dbReference>
<dbReference type="Gene3D" id="2.70.70.10">
    <property type="entry name" value="Glucose Permease (Domain IIA)"/>
    <property type="match status" value="1"/>
</dbReference>
<dbReference type="InterPro" id="IPR011055">
    <property type="entry name" value="Dup_hybrid_motif"/>
</dbReference>
<dbReference type="InterPro" id="IPR001127">
    <property type="entry name" value="PTS_EIIA_1_perm"/>
</dbReference>
<dbReference type="InterPro" id="IPR050890">
    <property type="entry name" value="PTS_EIIA_component"/>
</dbReference>
<dbReference type="NCBIfam" id="TIGR00830">
    <property type="entry name" value="PTBA"/>
    <property type="match status" value="1"/>
</dbReference>
<dbReference type="PANTHER" id="PTHR45008">
    <property type="entry name" value="PTS SYSTEM GLUCOSE-SPECIFIC EIIA COMPONENT"/>
    <property type="match status" value="1"/>
</dbReference>
<dbReference type="PANTHER" id="PTHR45008:SF1">
    <property type="entry name" value="PTS SYSTEM GLUCOSE-SPECIFIC EIIA COMPONENT"/>
    <property type="match status" value="1"/>
</dbReference>
<dbReference type="Pfam" id="PF00358">
    <property type="entry name" value="PTS_EIIA_1"/>
    <property type="match status" value="1"/>
</dbReference>
<dbReference type="SUPFAM" id="SSF51261">
    <property type="entry name" value="Duplicated hybrid motif"/>
    <property type="match status" value="1"/>
</dbReference>
<dbReference type="PROSITE" id="PS51093">
    <property type="entry name" value="PTS_EIIA_TYPE_1"/>
    <property type="match status" value="1"/>
</dbReference>
<dbReference type="PROSITE" id="PS00371">
    <property type="entry name" value="PTS_EIIA_TYPE_1_HIS"/>
    <property type="match status" value="1"/>
</dbReference>
<comment type="function">
    <text evidence="1">The phosphoenolpyruvate-dependent sugar phosphotransferase system (sugar PTS), a major carbohydrate active transport system, catalyzes the phosphorylation of incoming sugar substrates concomitantly with their translocation across the cell membrane. The enzyme II complex composed of PtsG and Crr is involved in glucose transport.</text>
</comment>
<comment type="cofactor">
    <cofactor evidence="1">
        <name>Zn(2+)</name>
        <dbReference type="ChEBI" id="CHEBI:29105"/>
    </cofactor>
    <text evidence="1">Binds 1 zinc ion per glycerol kinase EIIA-Glc dimer. The zinc ion is important for dimerization.</text>
</comment>
<comment type="subunit">
    <text evidence="1">Heterodimer with glycerol kinase (glpk).</text>
</comment>
<comment type="subcellular location">
    <subcellularLocation>
        <location evidence="3">Cytoplasm</location>
    </subcellularLocation>
</comment>
<comment type="domain">
    <text evidence="2">The EIIA domain is phosphorylated by phospho-HPr on a histidyl residue. Then, it transfers the phosphoryl group to the EIIB domain.</text>
</comment>
<evidence type="ECO:0000250" key="1">
    <source>
        <dbReference type="UniProtKB" id="P69783"/>
    </source>
</evidence>
<evidence type="ECO:0000255" key="2">
    <source>
        <dbReference type="PROSITE-ProRule" id="PRU00416"/>
    </source>
</evidence>
<evidence type="ECO:0000305" key="3"/>
<proteinExistence type="inferred from homology"/>
<sequence>MFKKLFGLDKKAKNEAASPQEELIYAPLNGTLVDIEDVPDPTFAQKMMGDGFAIDPRDGHVVAPVAGEIVQVFPTKHAVGIKTPGGAELLIHIGLETVNMKGEGFTAHVKEGDKVNVGDALVDFDLELVKEKAESTVTPVVVTNIDQLAVFEKQAATETKAGETSLVTIKVQG</sequence>
<accession>Q9KCQ4</accession>